<geneLocation type="mitochondrion"/>
<reference key="1">
    <citation type="journal article" date="1996" name="Copeia">
        <title>Crotaline intergeneric relationships based on mitochondrial DNA sequence data.</title>
        <authorList>
            <person name="Kraus F."/>
            <person name="Mink D.G."/>
            <person name="Brown W.M."/>
        </authorList>
    </citation>
    <scope>NUCLEOTIDE SEQUENCE [GENOMIC DNA]</scope>
</reference>
<protein>
    <recommendedName>
        <fullName>NADH-ubiquinone oxidoreductase chain 4</fullName>
        <ecNumber>7.1.1.2</ecNumber>
    </recommendedName>
    <alternativeName>
        <fullName>NADH dehydrogenase subunit 4</fullName>
    </alternativeName>
</protein>
<gene>
    <name type="primary">MT-ND4</name>
    <name type="synonym">MTND4</name>
    <name type="synonym">NADH4</name>
    <name type="synonym">ND4</name>
</gene>
<keyword id="KW-0249">Electron transport</keyword>
<keyword id="KW-0472">Membrane</keyword>
<keyword id="KW-0496">Mitochondrion</keyword>
<keyword id="KW-0520">NAD</keyword>
<keyword id="KW-0679">Respiratory chain</keyword>
<keyword id="KW-1278">Translocase</keyword>
<keyword id="KW-0812">Transmembrane</keyword>
<keyword id="KW-1133">Transmembrane helix</keyword>
<keyword id="KW-0813">Transport</keyword>
<keyword id="KW-0830">Ubiquinone</keyword>
<proteinExistence type="inferred from homology"/>
<organism>
    <name type="scientific">Azemiops feae</name>
    <name type="common">Fea's viper</name>
    <dbReference type="NCBI Taxonomy" id="8773"/>
    <lineage>
        <taxon>Eukaryota</taxon>
        <taxon>Metazoa</taxon>
        <taxon>Chordata</taxon>
        <taxon>Craniata</taxon>
        <taxon>Vertebrata</taxon>
        <taxon>Euteleostomi</taxon>
        <taxon>Lepidosauria</taxon>
        <taxon>Squamata</taxon>
        <taxon>Bifurcata</taxon>
        <taxon>Unidentata</taxon>
        <taxon>Episquamata</taxon>
        <taxon>Toxicofera</taxon>
        <taxon>Serpentes</taxon>
        <taxon>Colubroidea</taxon>
        <taxon>Viperidae</taxon>
        <taxon>Azemiopinae</taxon>
        <taxon>Azemiops</taxon>
    </lineage>
</organism>
<accession>P92494</accession>
<sequence>PIAGSMVLAAILLKLGGYGIIRIMQTLPTTKTDLFIPFITLALWGATLANLTCLQQTDLKSLIAYSSISHMGLVVAAITIQTPWGLSGAMALMIAHGFTSSALFCLANTTYERTHTRVLILTRGLHNILPMATTWWLLTNLMNIATPPTLNFTSELLIMSSLFNWCPTTIILLGLSMLITASYSLHMFLSTQAGPTLLNNQTEPTHSREHLLMALHLIPLMLISMKPELII</sequence>
<name>NU4M_AZEFE</name>
<feature type="chain" id="PRO_0000117898" description="NADH-ubiquinone oxidoreductase chain 4">
    <location>
        <begin position="1" status="less than"/>
        <end position="231" status="greater than"/>
    </location>
</feature>
<feature type="transmembrane region" description="Helical" evidence="2">
    <location>
        <begin position="1"/>
        <end position="21"/>
    </location>
</feature>
<feature type="transmembrane region" description="Helical" evidence="2">
    <location>
        <begin position="34"/>
        <end position="54"/>
    </location>
</feature>
<feature type="transmembrane region" description="Helical" evidence="2">
    <location>
        <begin position="61"/>
        <end position="80"/>
    </location>
</feature>
<feature type="transmembrane region" description="Helical" evidence="2">
    <location>
        <begin position="84"/>
        <end position="106"/>
    </location>
</feature>
<feature type="transmembrane region" description="Helical" evidence="2">
    <location>
        <begin position="118"/>
        <end position="138"/>
    </location>
</feature>
<feature type="transmembrane region" description="Helical" evidence="2">
    <location>
        <begin position="156"/>
        <end position="178"/>
    </location>
</feature>
<feature type="non-terminal residue">
    <location>
        <position position="1"/>
    </location>
</feature>
<feature type="non-terminal residue">
    <location>
        <position position="231"/>
    </location>
</feature>
<dbReference type="EC" id="7.1.1.2"/>
<dbReference type="EMBL" id="U41865">
    <property type="protein sequence ID" value="AAC27818.1"/>
    <property type="molecule type" value="Genomic_DNA"/>
</dbReference>
<dbReference type="SMR" id="P92494"/>
<dbReference type="GO" id="GO:0031966">
    <property type="term" value="C:mitochondrial membrane"/>
    <property type="evidence" value="ECO:0007669"/>
    <property type="project" value="UniProtKB-SubCell"/>
</dbReference>
<dbReference type="GO" id="GO:0008137">
    <property type="term" value="F:NADH dehydrogenase (ubiquinone) activity"/>
    <property type="evidence" value="ECO:0007669"/>
    <property type="project" value="UniProtKB-EC"/>
</dbReference>
<dbReference type="GO" id="GO:0048039">
    <property type="term" value="F:ubiquinone binding"/>
    <property type="evidence" value="ECO:0007669"/>
    <property type="project" value="TreeGrafter"/>
</dbReference>
<dbReference type="GO" id="GO:0042773">
    <property type="term" value="P:ATP synthesis coupled electron transport"/>
    <property type="evidence" value="ECO:0007669"/>
    <property type="project" value="InterPro"/>
</dbReference>
<dbReference type="GO" id="GO:0015990">
    <property type="term" value="P:electron transport coupled proton transport"/>
    <property type="evidence" value="ECO:0007669"/>
    <property type="project" value="TreeGrafter"/>
</dbReference>
<dbReference type="InterPro" id="IPR003918">
    <property type="entry name" value="NADH_UbQ_OxRdtase"/>
</dbReference>
<dbReference type="InterPro" id="IPR001750">
    <property type="entry name" value="ND/Mrp_TM"/>
</dbReference>
<dbReference type="PANTHER" id="PTHR43507">
    <property type="entry name" value="NADH-UBIQUINONE OXIDOREDUCTASE CHAIN 4"/>
    <property type="match status" value="1"/>
</dbReference>
<dbReference type="PANTHER" id="PTHR43507:SF20">
    <property type="entry name" value="NADH-UBIQUINONE OXIDOREDUCTASE CHAIN 4"/>
    <property type="match status" value="1"/>
</dbReference>
<dbReference type="Pfam" id="PF00361">
    <property type="entry name" value="Proton_antipo_M"/>
    <property type="match status" value="1"/>
</dbReference>
<dbReference type="PRINTS" id="PR01437">
    <property type="entry name" value="NUOXDRDTASE4"/>
</dbReference>
<comment type="function">
    <text evidence="1">Core subunit of the mitochondrial membrane respiratory chain NADH dehydrogenase (Complex I) that is believed to belong to the minimal assembly required for catalysis. Complex I functions in the transfer of electrons from NADH to the respiratory chain. The immediate electron acceptor for the enzyme is believed to be ubiquinone (By similarity).</text>
</comment>
<comment type="catalytic activity">
    <reaction>
        <text>a ubiquinone + NADH + 5 H(+)(in) = a ubiquinol + NAD(+) + 4 H(+)(out)</text>
        <dbReference type="Rhea" id="RHEA:29091"/>
        <dbReference type="Rhea" id="RHEA-COMP:9565"/>
        <dbReference type="Rhea" id="RHEA-COMP:9566"/>
        <dbReference type="ChEBI" id="CHEBI:15378"/>
        <dbReference type="ChEBI" id="CHEBI:16389"/>
        <dbReference type="ChEBI" id="CHEBI:17976"/>
        <dbReference type="ChEBI" id="CHEBI:57540"/>
        <dbReference type="ChEBI" id="CHEBI:57945"/>
        <dbReference type="EC" id="7.1.1.2"/>
    </reaction>
</comment>
<comment type="subcellular location">
    <subcellularLocation>
        <location evidence="1">Mitochondrion membrane</location>
        <topology evidence="1">Multi-pass membrane protein</topology>
    </subcellularLocation>
</comment>
<comment type="similarity">
    <text evidence="3">Belongs to the complex I subunit 4 family.</text>
</comment>
<evidence type="ECO:0000250" key="1"/>
<evidence type="ECO:0000255" key="2"/>
<evidence type="ECO:0000305" key="3"/>